<protein>
    <recommendedName>
        <fullName evidence="1">Probable GTP-binding protein EngB</fullName>
    </recommendedName>
</protein>
<comment type="function">
    <text evidence="1">Necessary for normal cell division and for the maintenance of normal septation.</text>
</comment>
<comment type="cofactor">
    <cofactor evidence="1">
        <name>Mg(2+)</name>
        <dbReference type="ChEBI" id="CHEBI:18420"/>
    </cofactor>
</comment>
<comment type="similarity">
    <text evidence="1">Belongs to the TRAFAC class TrmE-Era-EngA-EngB-Septin-like GTPase superfamily. EngB GTPase family.</text>
</comment>
<organism>
    <name type="scientific">Methanosarcina mazei (strain ATCC BAA-159 / DSM 3647 / Goe1 / Go1 / JCM 11833 / OCM 88)</name>
    <name type="common">Methanosarcina frisia</name>
    <dbReference type="NCBI Taxonomy" id="192952"/>
    <lineage>
        <taxon>Archaea</taxon>
        <taxon>Methanobacteriati</taxon>
        <taxon>Methanobacteriota</taxon>
        <taxon>Stenosarchaea group</taxon>
        <taxon>Methanomicrobia</taxon>
        <taxon>Methanosarcinales</taxon>
        <taxon>Methanosarcinaceae</taxon>
        <taxon>Methanosarcina</taxon>
    </lineage>
</organism>
<proteinExistence type="inferred from homology"/>
<sequence length="209" mass="23546">MKTSKTASESGINLEIIFAGRSNVGKSSLLKELFGAKVRVGKRPGVTLRPTHAQVSDLLITDMPGFGFMSGVKERKQDIVKDKTVHYIEDNAGRIKIAVLVIDGPAFPEIVDRWDSRDQIPIDVEMFDFLREIGIDTIVAANKMDKVKENESDPLLNEVAIRLGLEPPWQNWKHIIAPISAKKGDLKTLKGLLRDRLHEMKRDDLFKYI</sequence>
<dbReference type="EMBL" id="AE008384">
    <property type="protein sequence ID" value="AAM32411.1"/>
    <property type="molecule type" value="Genomic_DNA"/>
</dbReference>
<dbReference type="RefSeq" id="WP_011034624.1">
    <property type="nucleotide sequence ID" value="NC_003901.1"/>
</dbReference>
<dbReference type="SMR" id="Q8PTK0"/>
<dbReference type="GeneID" id="82161791"/>
<dbReference type="KEGG" id="mma:MM_2715"/>
<dbReference type="PATRIC" id="fig|192952.21.peg.3126"/>
<dbReference type="eggNOG" id="arCOG00355">
    <property type="taxonomic scope" value="Archaea"/>
</dbReference>
<dbReference type="HOGENOM" id="CLU_033732_3_0_2"/>
<dbReference type="Proteomes" id="UP000000595">
    <property type="component" value="Chromosome"/>
</dbReference>
<dbReference type="GO" id="GO:0005525">
    <property type="term" value="F:GTP binding"/>
    <property type="evidence" value="ECO:0007669"/>
    <property type="project" value="UniProtKB-UniRule"/>
</dbReference>
<dbReference type="GO" id="GO:0046872">
    <property type="term" value="F:metal ion binding"/>
    <property type="evidence" value="ECO:0007669"/>
    <property type="project" value="UniProtKB-KW"/>
</dbReference>
<dbReference type="GO" id="GO:0051301">
    <property type="term" value="P:cell division"/>
    <property type="evidence" value="ECO:0007669"/>
    <property type="project" value="UniProtKB-KW"/>
</dbReference>
<dbReference type="CDD" id="cd01876">
    <property type="entry name" value="YihA_EngB"/>
    <property type="match status" value="1"/>
</dbReference>
<dbReference type="Gene3D" id="3.40.50.300">
    <property type="entry name" value="P-loop containing nucleotide triphosphate hydrolases"/>
    <property type="match status" value="1"/>
</dbReference>
<dbReference type="HAMAP" id="MF_00321">
    <property type="entry name" value="GTPase_EngB"/>
    <property type="match status" value="1"/>
</dbReference>
<dbReference type="InterPro" id="IPR030393">
    <property type="entry name" value="G_ENGB_dom"/>
</dbReference>
<dbReference type="InterPro" id="IPR006073">
    <property type="entry name" value="GTP-bd"/>
</dbReference>
<dbReference type="InterPro" id="IPR019987">
    <property type="entry name" value="GTP-bd_ribosome_bio_YsxC"/>
</dbReference>
<dbReference type="InterPro" id="IPR027417">
    <property type="entry name" value="P-loop_NTPase"/>
</dbReference>
<dbReference type="NCBIfam" id="NF003255">
    <property type="entry name" value="PRK04213.1"/>
    <property type="match status" value="1"/>
</dbReference>
<dbReference type="PANTHER" id="PTHR11649:SF13">
    <property type="entry name" value="ENGB-TYPE G DOMAIN-CONTAINING PROTEIN"/>
    <property type="match status" value="1"/>
</dbReference>
<dbReference type="PANTHER" id="PTHR11649">
    <property type="entry name" value="MSS1/TRME-RELATED GTP-BINDING PROTEIN"/>
    <property type="match status" value="1"/>
</dbReference>
<dbReference type="Pfam" id="PF01926">
    <property type="entry name" value="MMR_HSR1"/>
    <property type="match status" value="1"/>
</dbReference>
<dbReference type="SUPFAM" id="SSF52540">
    <property type="entry name" value="P-loop containing nucleoside triphosphate hydrolases"/>
    <property type="match status" value="1"/>
</dbReference>
<dbReference type="PROSITE" id="PS51706">
    <property type="entry name" value="G_ENGB"/>
    <property type="match status" value="1"/>
</dbReference>
<accession>Q8PTK0</accession>
<evidence type="ECO:0000255" key="1">
    <source>
        <dbReference type="HAMAP-Rule" id="MF_00321"/>
    </source>
</evidence>
<keyword id="KW-0131">Cell cycle</keyword>
<keyword id="KW-0132">Cell division</keyword>
<keyword id="KW-0342">GTP-binding</keyword>
<keyword id="KW-0460">Magnesium</keyword>
<keyword id="KW-0479">Metal-binding</keyword>
<keyword id="KW-0547">Nucleotide-binding</keyword>
<keyword id="KW-0717">Septation</keyword>
<reference key="1">
    <citation type="journal article" date="2002" name="J. Mol. Microbiol. Biotechnol.">
        <title>The genome of Methanosarcina mazei: evidence for lateral gene transfer between Bacteria and Archaea.</title>
        <authorList>
            <person name="Deppenmeier U."/>
            <person name="Johann A."/>
            <person name="Hartsch T."/>
            <person name="Merkl R."/>
            <person name="Schmitz R.A."/>
            <person name="Martinez-Arias R."/>
            <person name="Henne A."/>
            <person name="Wiezer A."/>
            <person name="Baeumer S."/>
            <person name="Jacobi C."/>
            <person name="Brueggemann H."/>
            <person name="Lienard T."/>
            <person name="Christmann A."/>
            <person name="Boemecke M."/>
            <person name="Steckel S."/>
            <person name="Bhattacharyya A."/>
            <person name="Lykidis A."/>
            <person name="Overbeek R."/>
            <person name="Klenk H.-P."/>
            <person name="Gunsalus R.P."/>
            <person name="Fritz H.-J."/>
            <person name="Gottschalk G."/>
        </authorList>
    </citation>
    <scope>NUCLEOTIDE SEQUENCE [LARGE SCALE GENOMIC DNA]</scope>
    <source>
        <strain>ATCC BAA-159 / DSM 3647 / Goe1 / Go1 / JCM 11833 / OCM 88</strain>
    </source>
</reference>
<feature type="chain" id="PRO_0000157812" description="Probable GTP-binding protein EngB">
    <location>
        <begin position="1"/>
        <end position="209"/>
    </location>
</feature>
<feature type="domain" description="EngB-type G" evidence="1">
    <location>
        <begin position="12"/>
        <end position="203"/>
    </location>
</feature>
<feature type="binding site" evidence="1">
    <location>
        <begin position="20"/>
        <end position="27"/>
    </location>
    <ligand>
        <name>GTP</name>
        <dbReference type="ChEBI" id="CHEBI:37565"/>
    </ligand>
</feature>
<feature type="binding site" evidence="1">
    <location>
        <position position="27"/>
    </location>
    <ligand>
        <name>Mg(2+)</name>
        <dbReference type="ChEBI" id="CHEBI:18420"/>
    </ligand>
</feature>
<feature type="binding site" evidence="1">
    <location>
        <begin position="45"/>
        <end position="49"/>
    </location>
    <ligand>
        <name>GTP</name>
        <dbReference type="ChEBI" id="CHEBI:37565"/>
    </ligand>
</feature>
<feature type="binding site" evidence="1">
    <location>
        <position position="47"/>
    </location>
    <ligand>
        <name>Mg(2+)</name>
        <dbReference type="ChEBI" id="CHEBI:18420"/>
    </ligand>
</feature>
<feature type="binding site" evidence="1">
    <location>
        <begin position="62"/>
        <end position="65"/>
    </location>
    <ligand>
        <name>GTP</name>
        <dbReference type="ChEBI" id="CHEBI:37565"/>
    </ligand>
</feature>
<feature type="binding site" evidence="1">
    <location>
        <begin position="142"/>
        <end position="145"/>
    </location>
    <ligand>
        <name>GTP</name>
        <dbReference type="ChEBI" id="CHEBI:37565"/>
    </ligand>
</feature>
<feature type="binding site" evidence="1">
    <location>
        <begin position="179"/>
        <end position="181"/>
    </location>
    <ligand>
        <name>GTP</name>
        <dbReference type="ChEBI" id="CHEBI:37565"/>
    </ligand>
</feature>
<name>ENGB_METMA</name>
<gene>
    <name evidence="1" type="primary">engB</name>
    <name type="ordered locus">MM_2715</name>
</gene>